<accession>B3EWF6</accession>
<accession>K7WMQ9</accession>
<evidence type="ECO:0000250" key="1">
    <source>
        <dbReference type="UniProtKB" id="P58604"/>
    </source>
</evidence>
<evidence type="ECO:0000255" key="2"/>
<evidence type="ECO:0000269" key="3">
    <source>
    </source>
</evidence>
<evidence type="ECO:0000269" key="4">
    <source>
    </source>
</evidence>
<evidence type="ECO:0000303" key="5">
    <source>
    </source>
</evidence>
<evidence type="ECO:0000303" key="6">
    <source>
    </source>
</evidence>
<evidence type="ECO:0000305" key="7"/>
<evidence type="ECO:0000305" key="8">
    <source>
    </source>
</evidence>
<keyword id="KW-0027">Amidation</keyword>
<keyword id="KW-0903">Direct protein sequencing</keyword>
<keyword id="KW-1015">Disulfide bond</keyword>
<keyword id="KW-0960">Knottin</keyword>
<keyword id="KW-0964">Secreted</keyword>
<keyword id="KW-0732">Signal</keyword>
<keyword id="KW-0800">Toxin</keyword>
<reference key="1">
    <citation type="journal article" date="2013" name="Biochim. Biophys. Acta">
        <title>Cysteine-rich toxins from Lachesana tarabaevi spider venom with amphiphilic C-terminal segments.</title>
        <authorList>
            <person name="Kuzmenkov A.I."/>
            <person name="Fedorova I.M."/>
            <person name="Vassilevski A.A."/>
            <person name="Grishin E.V."/>
        </authorList>
    </citation>
    <scope>NUCLEOTIDE SEQUENCE [MRNA]</scope>
    <scope>PROTEIN SEQUENCE OF 43-107</scope>
    <scope>FUNCTION</scope>
    <scope>SUBCELLULAR LOCATION</scope>
    <scope>DISULFIDE BONDS</scope>
    <scope>MASS SPECTROMETRY</scope>
    <scope>TOXIC DOSE</scope>
    <scope>AMIDATION AT ILE-107</scope>
    <source>
        <tissue>Venom</tissue>
        <tissue>Venom gland</tissue>
    </source>
</reference>
<reference key="2">
    <citation type="journal article" date="2016" name="Biochem. J.">
        <title>Lachesana tarabaevi, an expert in membrane-active toxins.</title>
        <authorList>
            <person name="Kuzmenkov A.I."/>
            <person name="Sachkova M.Y."/>
            <person name="Kovalchuk S.I."/>
            <person name="Grishin E.V."/>
            <person name="Vassilevski A.A."/>
        </authorList>
    </citation>
    <scope>SUBCELLULAR LOCATION</scope>
    <scope>PQM MOTIF</scope>
    <scope>MASS SPECTROMETRY</scope>
    <source>
        <tissue>Venom</tissue>
    </source>
</reference>
<organism>
    <name type="scientific">Lachesana tarabaevi</name>
    <name type="common">Spider</name>
    <dbReference type="NCBI Taxonomy" id="379576"/>
    <lineage>
        <taxon>Eukaryota</taxon>
        <taxon>Metazoa</taxon>
        <taxon>Ecdysozoa</taxon>
        <taxon>Arthropoda</taxon>
        <taxon>Chelicerata</taxon>
        <taxon>Arachnida</taxon>
        <taxon>Araneae</taxon>
        <taxon>Araneomorphae</taxon>
        <taxon>Entelegynae</taxon>
        <taxon>Entelegynae incertae sedis</taxon>
        <taxon>Zodariidae</taxon>
        <taxon>Lachesana</taxon>
    </lineage>
</organism>
<name>LTX2C_LACTA</name>
<feature type="signal peptide" evidence="2">
    <location>
        <begin position="1"/>
        <end position="19"/>
    </location>
</feature>
<feature type="propeptide" id="PRO_0000421849" description="Removed in mature form" evidence="3">
    <location>
        <begin position="20"/>
        <end position="42"/>
    </location>
</feature>
<feature type="peptide" id="PRO_0000421850" description="Latartoxin-2c">
    <location>
        <begin position="43"/>
        <end position="107"/>
    </location>
</feature>
<feature type="short sequence motif" description="Processing quadruplet motif" evidence="6">
    <location>
        <begin position="39"/>
        <end position="42"/>
    </location>
</feature>
<feature type="modified residue" description="Isoleucine amide" evidence="3">
    <location>
        <position position="107"/>
    </location>
</feature>
<feature type="disulfide bond" evidence="1">
    <location>
        <begin position="44"/>
        <end position="61"/>
    </location>
</feature>
<feature type="disulfide bond" evidence="1">
    <location>
        <begin position="51"/>
        <end position="72"/>
    </location>
</feature>
<feature type="disulfide bond" evidence="1">
    <location>
        <begin position="60"/>
        <end position="84"/>
    </location>
</feature>
<feature type="disulfide bond" evidence="1">
    <location>
        <begin position="74"/>
        <end position="82"/>
    </location>
</feature>
<comment type="function">
    <text evidence="3">Insect toxin.</text>
</comment>
<comment type="subcellular location">
    <subcellularLocation>
        <location evidence="3 4">Secreted</location>
    </subcellularLocation>
</comment>
<comment type="tissue specificity">
    <text evidence="8">Expressed by the venom gland.</text>
</comment>
<comment type="domain">
    <text evidence="7">The presence of a 'disulfide through disulfide knot' structurally defines this protein as a knottin.</text>
</comment>
<comment type="PTM">
    <text evidence="3">Contains 4 disulfide bonds.</text>
</comment>
<comment type="PTM">
    <text evidence="6">Cleavage of the propeptide depends on the processing quadruplet motif (XXXR, with at least one of X being E).</text>
</comment>
<comment type="mass spectrometry" mass="7669.1" error="0.5" method="MALDI" evidence="3"/>
<comment type="mass spectrometry" mass="7669.7" method="MALDI" evidence="4"/>
<comment type="toxic dose">
    <text evidence="3">LD(50) is 50 ug/g in flesh fly larvae (S.carnaria).</text>
</comment>
<comment type="toxic dose">
    <text evidence="3">LD(50) is 50 ug/g in house crickets (Acheta domesticus).</text>
</comment>
<comment type="similarity">
    <text evidence="2">Belongs to the neurotoxin 19 (CSTX) family. 11 (latartoxin) subfamily.</text>
</comment>
<dbReference type="EMBL" id="JQ513647">
    <property type="protein sequence ID" value="AFX65332.1"/>
    <property type="molecule type" value="mRNA"/>
</dbReference>
<dbReference type="SMR" id="B3EWF6"/>
<dbReference type="ArachnoServer" id="AS001867">
    <property type="toxin name" value="U2-zodatoxin-Lt2c"/>
</dbReference>
<dbReference type="GO" id="GO:0005576">
    <property type="term" value="C:extracellular region"/>
    <property type="evidence" value="ECO:0007669"/>
    <property type="project" value="UniProtKB-SubCell"/>
</dbReference>
<dbReference type="GO" id="GO:0090729">
    <property type="term" value="F:toxin activity"/>
    <property type="evidence" value="ECO:0007669"/>
    <property type="project" value="UniProtKB-KW"/>
</dbReference>
<sequence length="108" mass="12617">MKVLVITALCFILLQNVLGEDTYEDLQNYIENLINENQDEARECVPLENDCTKLKYSNPCCKDEKKKYQYKCSCIVDKTEQCTCQRKETVEKMMKGMKYIKNLGKKIG</sequence>
<protein>
    <recommendedName>
        <fullName evidence="5">Latartoxin-2c</fullName>
        <shortName evidence="5">LtTx-2c</shortName>
    </recommendedName>
</protein>
<proteinExistence type="evidence at protein level"/>